<accession>A4TMF9</accession>
<comment type="function">
    <text evidence="1">Catalyzes the attachment of glutamate to tRNA(Glu) in a two-step reaction: glutamate is first activated by ATP to form Glu-AMP and then transferred to the acceptor end of tRNA(Glu).</text>
</comment>
<comment type="catalytic activity">
    <reaction evidence="1">
        <text>tRNA(Glu) + L-glutamate + ATP = L-glutamyl-tRNA(Glu) + AMP + diphosphate</text>
        <dbReference type="Rhea" id="RHEA:23540"/>
        <dbReference type="Rhea" id="RHEA-COMP:9663"/>
        <dbReference type="Rhea" id="RHEA-COMP:9680"/>
        <dbReference type="ChEBI" id="CHEBI:29985"/>
        <dbReference type="ChEBI" id="CHEBI:30616"/>
        <dbReference type="ChEBI" id="CHEBI:33019"/>
        <dbReference type="ChEBI" id="CHEBI:78442"/>
        <dbReference type="ChEBI" id="CHEBI:78520"/>
        <dbReference type="ChEBI" id="CHEBI:456215"/>
        <dbReference type="EC" id="6.1.1.17"/>
    </reaction>
</comment>
<comment type="cofactor">
    <cofactor evidence="1">
        <name>Zn(2+)</name>
        <dbReference type="ChEBI" id="CHEBI:29105"/>
    </cofactor>
    <text evidence="1">Binds 1 zinc ion per subunit.</text>
</comment>
<comment type="subunit">
    <text evidence="1">Monomer.</text>
</comment>
<comment type="subcellular location">
    <subcellularLocation>
        <location evidence="1">Cytoplasm</location>
    </subcellularLocation>
</comment>
<comment type="similarity">
    <text evidence="1">Belongs to the class-I aminoacyl-tRNA synthetase family. Glutamate--tRNA ligase type 1 subfamily.</text>
</comment>
<sequence length="471" mass="53110">MKIKTRFAPSPTGYLHVGGARTALYSWLFSRHLGGEFVLRIEDTDLGRSTQEAIDAIMDGMNWLNLDWDEGPYFQTKRFDRYNAVIDQMLDAGTAYRCYCSKERLEALREAQMANGEKPRYDGHCRDSQCTHGADEPSVVRFRNPQEGSVIFDDKIRGPIEFSNQELDDLIIRRTDGSPTYNFCVVIDDWDMEITHVIRGEDHINNTPRQINILKALGAPVPEYAHVSMILGDDGKKLSKRHGAVGVMQYRDDGYLPEALLNYLVRLGWSHGDQEIFSIEEMTQLFTLDAVSKSASAFNTEKLQWLNHHYINSLPPEQVAVHLSWHVEQLGIDTRNGPELVEIVKLLGERCKTLKEMAESCRYFYEEFDAFDVDAAKKHLRPIARQPLEAVKVKLAAITEWTTENVHNAIQGTADELGVGMGKVGMPLRVAVTGVGQSPGMDVTVHAIGQARTLARIDKALAFISEREAQQ</sequence>
<evidence type="ECO:0000255" key="1">
    <source>
        <dbReference type="HAMAP-Rule" id="MF_00022"/>
    </source>
</evidence>
<organism>
    <name type="scientific">Yersinia pestis (strain Pestoides F)</name>
    <dbReference type="NCBI Taxonomy" id="386656"/>
    <lineage>
        <taxon>Bacteria</taxon>
        <taxon>Pseudomonadati</taxon>
        <taxon>Pseudomonadota</taxon>
        <taxon>Gammaproteobacteria</taxon>
        <taxon>Enterobacterales</taxon>
        <taxon>Yersiniaceae</taxon>
        <taxon>Yersinia</taxon>
    </lineage>
</organism>
<dbReference type="EC" id="6.1.1.17" evidence="1"/>
<dbReference type="EMBL" id="CP000668">
    <property type="protein sequence ID" value="ABP40471.1"/>
    <property type="molecule type" value="Genomic_DNA"/>
</dbReference>
<dbReference type="RefSeq" id="WP_002222185.1">
    <property type="nucleotide sequence ID" value="NZ_CP009715.1"/>
</dbReference>
<dbReference type="SMR" id="A4TMF9"/>
<dbReference type="GeneID" id="57975716"/>
<dbReference type="KEGG" id="ypp:YPDSF_2092"/>
<dbReference type="PATRIC" id="fig|386656.14.peg.3567"/>
<dbReference type="GO" id="GO:0005829">
    <property type="term" value="C:cytosol"/>
    <property type="evidence" value="ECO:0007669"/>
    <property type="project" value="TreeGrafter"/>
</dbReference>
<dbReference type="GO" id="GO:0005524">
    <property type="term" value="F:ATP binding"/>
    <property type="evidence" value="ECO:0007669"/>
    <property type="project" value="UniProtKB-UniRule"/>
</dbReference>
<dbReference type="GO" id="GO:0004818">
    <property type="term" value="F:glutamate-tRNA ligase activity"/>
    <property type="evidence" value="ECO:0007669"/>
    <property type="project" value="UniProtKB-UniRule"/>
</dbReference>
<dbReference type="GO" id="GO:0000049">
    <property type="term" value="F:tRNA binding"/>
    <property type="evidence" value="ECO:0007669"/>
    <property type="project" value="InterPro"/>
</dbReference>
<dbReference type="GO" id="GO:0008270">
    <property type="term" value="F:zinc ion binding"/>
    <property type="evidence" value="ECO:0007669"/>
    <property type="project" value="UniProtKB-UniRule"/>
</dbReference>
<dbReference type="GO" id="GO:0006424">
    <property type="term" value="P:glutamyl-tRNA aminoacylation"/>
    <property type="evidence" value="ECO:0007669"/>
    <property type="project" value="UniProtKB-UniRule"/>
</dbReference>
<dbReference type="CDD" id="cd00808">
    <property type="entry name" value="GluRS_core"/>
    <property type="match status" value="1"/>
</dbReference>
<dbReference type="FunFam" id="1.10.10.350:FF:000001">
    <property type="entry name" value="Glutamate--tRNA ligase"/>
    <property type="match status" value="1"/>
</dbReference>
<dbReference type="FunFam" id="3.40.50.620:FF:000007">
    <property type="entry name" value="Glutamate--tRNA ligase"/>
    <property type="match status" value="1"/>
</dbReference>
<dbReference type="Gene3D" id="1.10.10.350">
    <property type="match status" value="1"/>
</dbReference>
<dbReference type="Gene3D" id="3.40.50.620">
    <property type="entry name" value="HUPs"/>
    <property type="match status" value="1"/>
</dbReference>
<dbReference type="HAMAP" id="MF_00022">
    <property type="entry name" value="Glu_tRNA_synth_type1"/>
    <property type="match status" value="1"/>
</dbReference>
<dbReference type="InterPro" id="IPR045462">
    <property type="entry name" value="aa-tRNA-synth_I_cd-bd"/>
</dbReference>
<dbReference type="InterPro" id="IPR020751">
    <property type="entry name" value="aa-tRNA-synth_I_codon-bd_sub2"/>
</dbReference>
<dbReference type="InterPro" id="IPR001412">
    <property type="entry name" value="aa-tRNA-synth_I_CS"/>
</dbReference>
<dbReference type="InterPro" id="IPR008925">
    <property type="entry name" value="aa_tRNA-synth_I_cd-bd_sf"/>
</dbReference>
<dbReference type="InterPro" id="IPR004527">
    <property type="entry name" value="Glu-tRNA-ligase_bac/mito"/>
</dbReference>
<dbReference type="InterPro" id="IPR000924">
    <property type="entry name" value="Glu/Gln-tRNA-synth"/>
</dbReference>
<dbReference type="InterPro" id="IPR020058">
    <property type="entry name" value="Glu/Gln-tRNA-synth_Ib_cat-dom"/>
</dbReference>
<dbReference type="InterPro" id="IPR049940">
    <property type="entry name" value="GluQ/Sye"/>
</dbReference>
<dbReference type="InterPro" id="IPR033910">
    <property type="entry name" value="GluRS_core"/>
</dbReference>
<dbReference type="InterPro" id="IPR014729">
    <property type="entry name" value="Rossmann-like_a/b/a_fold"/>
</dbReference>
<dbReference type="NCBIfam" id="TIGR00464">
    <property type="entry name" value="gltX_bact"/>
    <property type="match status" value="1"/>
</dbReference>
<dbReference type="PANTHER" id="PTHR43311">
    <property type="entry name" value="GLUTAMATE--TRNA LIGASE"/>
    <property type="match status" value="1"/>
</dbReference>
<dbReference type="PANTHER" id="PTHR43311:SF2">
    <property type="entry name" value="GLUTAMATE--TRNA LIGASE, MITOCHONDRIAL-RELATED"/>
    <property type="match status" value="1"/>
</dbReference>
<dbReference type="Pfam" id="PF19269">
    <property type="entry name" value="Anticodon_2"/>
    <property type="match status" value="1"/>
</dbReference>
<dbReference type="Pfam" id="PF00749">
    <property type="entry name" value="tRNA-synt_1c"/>
    <property type="match status" value="1"/>
</dbReference>
<dbReference type="PRINTS" id="PR00987">
    <property type="entry name" value="TRNASYNTHGLU"/>
</dbReference>
<dbReference type="SUPFAM" id="SSF48163">
    <property type="entry name" value="An anticodon-binding domain of class I aminoacyl-tRNA synthetases"/>
    <property type="match status" value="1"/>
</dbReference>
<dbReference type="SUPFAM" id="SSF52374">
    <property type="entry name" value="Nucleotidylyl transferase"/>
    <property type="match status" value="1"/>
</dbReference>
<dbReference type="PROSITE" id="PS00178">
    <property type="entry name" value="AA_TRNA_LIGASE_I"/>
    <property type="match status" value="1"/>
</dbReference>
<protein>
    <recommendedName>
        <fullName evidence="1">Glutamate--tRNA ligase</fullName>
        <ecNumber evidence="1">6.1.1.17</ecNumber>
    </recommendedName>
    <alternativeName>
        <fullName evidence="1">Glutamyl-tRNA synthetase</fullName>
        <shortName evidence="1">GluRS</shortName>
    </alternativeName>
</protein>
<feature type="chain" id="PRO_1000001987" description="Glutamate--tRNA ligase">
    <location>
        <begin position="1"/>
        <end position="471"/>
    </location>
</feature>
<feature type="short sequence motif" description="'HIGH' region" evidence="1">
    <location>
        <begin position="9"/>
        <end position="19"/>
    </location>
</feature>
<feature type="short sequence motif" description="'KMSKS' region" evidence="1">
    <location>
        <begin position="237"/>
        <end position="241"/>
    </location>
</feature>
<feature type="binding site" evidence="1">
    <location>
        <position position="98"/>
    </location>
    <ligand>
        <name>Zn(2+)</name>
        <dbReference type="ChEBI" id="CHEBI:29105"/>
    </ligand>
</feature>
<feature type="binding site" evidence="1">
    <location>
        <position position="100"/>
    </location>
    <ligand>
        <name>Zn(2+)</name>
        <dbReference type="ChEBI" id="CHEBI:29105"/>
    </ligand>
</feature>
<feature type="binding site" evidence="1">
    <location>
        <position position="125"/>
    </location>
    <ligand>
        <name>Zn(2+)</name>
        <dbReference type="ChEBI" id="CHEBI:29105"/>
    </ligand>
</feature>
<feature type="binding site" evidence="1">
    <location>
        <position position="127"/>
    </location>
    <ligand>
        <name>Zn(2+)</name>
        <dbReference type="ChEBI" id="CHEBI:29105"/>
    </ligand>
</feature>
<feature type="binding site" evidence="1">
    <location>
        <position position="240"/>
    </location>
    <ligand>
        <name>ATP</name>
        <dbReference type="ChEBI" id="CHEBI:30616"/>
    </ligand>
</feature>
<keyword id="KW-0030">Aminoacyl-tRNA synthetase</keyword>
<keyword id="KW-0067">ATP-binding</keyword>
<keyword id="KW-0963">Cytoplasm</keyword>
<keyword id="KW-0436">Ligase</keyword>
<keyword id="KW-0479">Metal-binding</keyword>
<keyword id="KW-0547">Nucleotide-binding</keyword>
<keyword id="KW-0648">Protein biosynthesis</keyword>
<keyword id="KW-0862">Zinc</keyword>
<gene>
    <name evidence="1" type="primary">gltX</name>
    <name type="ordered locus">YPDSF_2092</name>
</gene>
<proteinExistence type="inferred from homology"/>
<reference key="1">
    <citation type="submission" date="2007-02" db="EMBL/GenBank/DDBJ databases">
        <title>Complete sequence of chromosome of Yersinia pestis Pestoides F.</title>
        <authorList>
            <consortium name="US DOE Joint Genome Institute"/>
            <person name="Copeland A."/>
            <person name="Lucas S."/>
            <person name="Lapidus A."/>
            <person name="Barry K."/>
            <person name="Detter J.C."/>
            <person name="Glavina del Rio T."/>
            <person name="Hammon N."/>
            <person name="Israni S."/>
            <person name="Dalin E."/>
            <person name="Tice H."/>
            <person name="Pitluck S."/>
            <person name="Di Bartolo G."/>
            <person name="Chain P."/>
            <person name="Malfatti S."/>
            <person name="Shin M."/>
            <person name="Vergez L."/>
            <person name="Schmutz J."/>
            <person name="Larimer F."/>
            <person name="Land M."/>
            <person name="Hauser L."/>
            <person name="Worsham P."/>
            <person name="Chu M."/>
            <person name="Bearden S."/>
            <person name="Garcia E."/>
            <person name="Richardson P."/>
        </authorList>
    </citation>
    <scope>NUCLEOTIDE SEQUENCE [LARGE SCALE GENOMIC DNA]</scope>
    <source>
        <strain>Pestoides F</strain>
    </source>
</reference>
<name>SYE_YERPP</name>